<reference key="1">
    <citation type="journal article" date="1998" name="Nature">
        <title>The genome sequence of Rickettsia prowazekii and the origin of mitochondria.</title>
        <authorList>
            <person name="Andersson S.G.E."/>
            <person name="Zomorodipour A."/>
            <person name="Andersson J.O."/>
            <person name="Sicheritz-Ponten T."/>
            <person name="Alsmark U.C.M."/>
            <person name="Podowski R.M."/>
            <person name="Naeslund A.K."/>
            <person name="Eriksson A.-S."/>
            <person name="Winkler H.H."/>
            <person name="Kurland C.G."/>
        </authorList>
    </citation>
    <scope>NUCLEOTIDE SEQUENCE [LARGE SCALE GENOMIC DNA]</scope>
    <source>
        <strain>Madrid E</strain>
    </source>
</reference>
<sequence length="101" mass="11527">MAKVSSIQKNKSRQKKSQSLHNKRSELKSKIYDKSLSLEQRFPLIIALAQLPRNSSSTRIRNRCELTGRPRGVIRKFGISRNKLRELIGRGLVPGVVKASW</sequence>
<organism>
    <name type="scientific">Rickettsia prowazekii (strain Madrid E)</name>
    <dbReference type="NCBI Taxonomy" id="272947"/>
    <lineage>
        <taxon>Bacteria</taxon>
        <taxon>Pseudomonadati</taxon>
        <taxon>Pseudomonadota</taxon>
        <taxon>Alphaproteobacteria</taxon>
        <taxon>Rickettsiales</taxon>
        <taxon>Rickettsiaceae</taxon>
        <taxon>Rickettsieae</taxon>
        <taxon>Rickettsia</taxon>
        <taxon>typhus group</taxon>
    </lineage>
</organism>
<protein>
    <recommendedName>
        <fullName evidence="1">Small ribosomal subunit protein uS14</fullName>
    </recommendedName>
    <alternativeName>
        <fullName evidence="3">30S ribosomal protein S14</fullName>
    </alternativeName>
</protein>
<feature type="chain" id="PRO_0000130922" description="Small ribosomal subunit protein uS14">
    <location>
        <begin position="1"/>
        <end position="101"/>
    </location>
</feature>
<feature type="region of interest" description="Disordered" evidence="2">
    <location>
        <begin position="1"/>
        <end position="26"/>
    </location>
</feature>
<feature type="compositionally biased region" description="Basic residues" evidence="2">
    <location>
        <begin position="10"/>
        <end position="22"/>
    </location>
</feature>
<name>RS14_RICPR</name>
<comment type="function">
    <text evidence="1">Binds 16S rRNA, required for the assembly of 30S particles and may also be responsible for determining the conformation of the 16S rRNA at the A site.</text>
</comment>
<comment type="subunit">
    <text evidence="1">Part of the 30S ribosomal subunit. Contacts proteins S3 and S10.</text>
</comment>
<comment type="similarity">
    <text evidence="1">Belongs to the universal ribosomal protein uS14 family.</text>
</comment>
<gene>
    <name evidence="1" type="primary">rpsN</name>
    <name type="ordered locus">RP646</name>
</gene>
<dbReference type="EMBL" id="AJ235272">
    <property type="protein sequence ID" value="CAA15086.1"/>
    <property type="molecule type" value="Genomic_DNA"/>
</dbReference>
<dbReference type="PIR" id="D71670">
    <property type="entry name" value="D71670"/>
</dbReference>
<dbReference type="RefSeq" id="NP_221010.1">
    <property type="nucleotide sequence ID" value="NC_000963.1"/>
</dbReference>
<dbReference type="RefSeq" id="WP_004596221.1">
    <property type="nucleotide sequence ID" value="NC_000963.1"/>
</dbReference>
<dbReference type="SMR" id="Q9ZCR8"/>
<dbReference type="STRING" id="272947.gene:17555723"/>
<dbReference type="EnsemblBacteria" id="CAA15086">
    <property type="protein sequence ID" value="CAA15086"/>
    <property type="gene ID" value="CAA15086"/>
</dbReference>
<dbReference type="GeneID" id="57569771"/>
<dbReference type="KEGG" id="rpr:RP646"/>
<dbReference type="PATRIC" id="fig|272947.5.peg.668"/>
<dbReference type="eggNOG" id="COG0199">
    <property type="taxonomic scope" value="Bacteria"/>
</dbReference>
<dbReference type="HOGENOM" id="CLU_139869_0_1_5"/>
<dbReference type="OrthoDB" id="9810484at2"/>
<dbReference type="Proteomes" id="UP000002480">
    <property type="component" value="Chromosome"/>
</dbReference>
<dbReference type="GO" id="GO:0005737">
    <property type="term" value="C:cytoplasm"/>
    <property type="evidence" value="ECO:0007669"/>
    <property type="project" value="UniProtKB-ARBA"/>
</dbReference>
<dbReference type="GO" id="GO:0015935">
    <property type="term" value="C:small ribosomal subunit"/>
    <property type="evidence" value="ECO:0007669"/>
    <property type="project" value="TreeGrafter"/>
</dbReference>
<dbReference type="GO" id="GO:0019843">
    <property type="term" value="F:rRNA binding"/>
    <property type="evidence" value="ECO:0007669"/>
    <property type="project" value="UniProtKB-UniRule"/>
</dbReference>
<dbReference type="GO" id="GO:0003735">
    <property type="term" value="F:structural constituent of ribosome"/>
    <property type="evidence" value="ECO:0007669"/>
    <property type="project" value="InterPro"/>
</dbReference>
<dbReference type="GO" id="GO:0006412">
    <property type="term" value="P:translation"/>
    <property type="evidence" value="ECO:0007669"/>
    <property type="project" value="UniProtKB-UniRule"/>
</dbReference>
<dbReference type="FunFam" id="1.10.287.1480:FF:000001">
    <property type="entry name" value="30S ribosomal protein S14"/>
    <property type="match status" value="1"/>
</dbReference>
<dbReference type="Gene3D" id="1.10.287.1480">
    <property type="match status" value="1"/>
</dbReference>
<dbReference type="HAMAP" id="MF_00537">
    <property type="entry name" value="Ribosomal_uS14_1"/>
    <property type="match status" value="1"/>
</dbReference>
<dbReference type="InterPro" id="IPR001209">
    <property type="entry name" value="Ribosomal_uS14"/>
</dbReference>
<dbReference type="InterPro" id="IPR023036">
    <property type="entry name" value="Ribosomal_uS14_bac/plastid"/>
</dbReference>
<dbReference type="InterPro" id="IPR018271">
    <property type="entry name" value="Ribosomal_uS14_CS"/>
</dbReference>
<dbReference type="NCBIfam" id="NF006477">
    <property type="entry name" value="PRK08881.1"/>
    <property type="match status" value="1"/>
</dbReference>
<dbReference type="PANTHER" id="PTHR19836">
    <property type="entry name" value="30S RIBOSOMAL PROTEIN S14"/>
    <property type="match status" value="1"/>
</dbReference>
<dbReference type="PANTHER" id="PTHR19836:SF19">
    <property type="entry name" value="SMALL RIBOSOMAL SUBUNIT PROTEIN US14M"/>
    <property type="match status" value="1"/>
</dbReference>
<dbReference type="Pfam" id="PF00253">
    <property type="entry name" value="Ribosomal_S14"/>
    <property type="match status" value="1"/>
</dbReference>
<dbReference type="SUPFAM" id="SSF57716">
    <property type="entry name" value="Glucocorticoid receptor-like (DNA-binding domain)"/>
    <property type="match status" value="1"/>
</dbReference>
<dbReference type="PROSITE" id="PS00527">
    <property type="entry name" value="RIBOSOMAL_S14"/>
    <property type="match status" value="1"/>
</dbReference>
<keyword id="KW-1185">Reference proteome</keyword>
<keyword id="KW-0687">Ribonucleoprotein</keyword>
<keyword id="KW-0689">Ribosomal protein</keyword>
<keyword id="KW-0694">RNA-binding</keyword>
<keyword id="KW-0699">rRNA-binding</keyword>
<accession>Q9ZCR8</accession>
<evidence type="ECO:0000255" key="1">
    <source>
        <dbReference type="HAMAP-Rule" id="MF_00537"/>
    </source>
</evidence>
<evidence type="ECO:0000256" key="2">
    <source>
        <dbReference type="SAM" id="MobiDB-lite"/>
    </source>
</evidence>
<evidence type="ECO:0000305" key="3"/>
<proteinExistence type="inferred from homology"/>